<name>RL9_ECOUT</name>
<keyword id="KW-0007">Acetylation</keyword>
<keyword id="KW-0687">Ribonucleoprotein</keyword>
<keyword id="KW-0689">Ribosomal protein</keyword>
<keyword id="KW-0694">RNA-binding</keyword>
<keyword id="KW-0699">rRNA-binding</keyword>
<organism>
    <name type="scientific">Escherichia coli (strain UTI89 / UPEC)</name>
    <dbReference type="NCBI Taxonomy" id="364106"/>
    <lineage>
        <taxon>Bacteria</taxon>
        <taxon>Pseudomonadati</taxon>
        <taxon>Pseudomonadota</taxon>
        <taxon>Gammaproteobacteria</taxon>
        <taxon>Enterobacterales</taxon>
        <taxon>Enterobacteriaceae</taxon>
        <taxon>Escherichia</taxon>
    </lineage>
</organism>
<feature type="chain" id="PRO_0000258457" description="Large ribosomal subunit protein bL9">
    <location>
        <begin position="1"/>
        <end position="149"/>
    </location>
</feature>
<feature type="modified residue" description="N6-acetyllysine" evidence="1">
    <location>
        <position position="89"/>
    </location>
</feature>
<gene>
    <name evidence="1" type="primary">rplI</name>
    <name type="ordered locus">UTI89_C4803</name>
</gene>
<protein>
    <recommendedName>
        <fullName evidence="1">Large ribosomal subunit protein bL9</fullName>
    </recommendedName>
    <alternativeName>
        <fullName evidence="2">50S ribosomal protein L9</fullName>
    </alternativeName>
</protein>
<reference key="1">
    <citation type="journal article" date="2006" name="Proc. Natl. Acad. Sci. U.S.A.">
        <title>Identification of genes subject to positive selection in uropathogenic strains of Escherichia coli: a comparative genomics approach.</title>
        <authorList>
            <person name="Chen S.L."/>
            <person name="Hung C.-S."/>
            <person name="Xu J."/>
            <person name="Reigstad C.S."/>
            <person name="Magrini V."/>
            <person name="Sabo A."/>
            <person name="Blasiar D."/>
            <person name="Bieri T."/>
            <person name="Meyer R.R."/>
            <person name="Ozersky P."/>
            <person name="Armstrong J.R."/>
            <person name="Fulton R.S."/>
            <person name="Latreille J.P."/>
            <person name="Spieth J."/>
            <person name="Hooton T.M."/>
            <person name="Mardis E.R."/>
            <person name="Hultgren S.J."/>
            <person name="Gordon J.I."/>
        </authorList>
    </citation>
    <scope>NUCLEOTIDE SEQUENCE [LARGE SCALE GENOMIC DNA]</scope>
    <source>
        <strain>UTI89 / UPEC</strain>
    </source>
</reference>
<evidence type="ECO:0000255" key="1">
    <source>
        <dbReference type="HAMAP-Rule" id="MF_00503"/>
    </source>
</evidence>
<evidence type="ECO:0000305" key="2"/>
<dbReference type="EMBL" id="CP000243">
    <property type="protein sequence ID" value="ABE10207.1"/>
    <property type="molecule type" value="Genomic_DNA"/>
</dbReference>
<dbReference type="RefSeq" id="WP_001196062.1">
    <property type="nucleotide sequence ID" value="NZ_CP064825.1"/>
</dbReference>
<dbReference type="SMR" id="Q1R357"/>
<dbReference type="GeneID" id="93777620"/>
<dbReference type="KEGG" id="eci:UTI89_C4803"/>
<dbReference type="HOGENOM" id="CLU_078938_4_1_6"/>
<dbReference type="Proteomes" id="UP000001952">
    <property type="component" value="Chromosome"/>
</dbReference>
<dbReference type="GO" id="GO:1990904">
    <property type="term" value="C:ribonucleoprotein complex"/>
    <property type="evidence" value="ECO:0007669"/>
    <property type="project" value="UniProtKB-KW"/>
</dbReference>
<dbReference type="GO" id="GO:0005840">
    <property type="term" value="C:ribosome"/>
    <property type="evidence" value="ECO:0007669"/>
    <property type="project" value="UniProtKB-KW"/>
</dbReference>
<dbReference type="GO" id="GO:0019843">
    <property type="term" value="F:rRNA binding"/>
    <property type="evidence" value="ECO:0007669"/>
    <property type="project" value="UniProtKB-UniRule"/>
</dbReference>
<dbReference type="GO" id="GO:0003735">
    <property type="term" value="F:structural constituent of ribosome"/>
    <property type="evidence" value="ECO:0007669"/>
    <property type="project" value="InterPro"/>
</dbReference>
<dbReference type="GO" id="GO:0006412">
    <property type="term" value="P:translation"/>
    <property type="evidence" value="ECO:0007669"/>
    <property type="project" value="UniProtKB-UniRule"/>
</dbReference>
<dbReference type="FunFam" id="3.10.430.100:FF:000001">
    <property type="entry name" value="50S ribosomal protein L9"/>
    <property type="match status" value="1"/>
</dbReference>
<dbReference type="FunFam" id="3.40.5.10:FF:000001">
    <property type="entry name" value="50S ribosomal protein L9"/>
    <property type="match status" value="1"/>
</dbReference>
<dbReference type="Gene3D" id="3.10.430.100">
    <property type="entry name" value="Ribosomal protein L9, C-terminal domain"/>
    <property type="match status" value="1"/>
</dbReference>
<dbReference type="Gene3D" id="3.40.5.10">
    <property type="entry name" value="Ribosomal protein L9, N-terminal domain"/>
    <property type="match status" value="1"/>
</dbReference>
<dbReference type="HAMAP" id="MF_00503">
    <property type="entry name" value="Ribosomal_bL9"/>
    <property type="match status" value="1"/>
</dbReference>
<dbReference type="InterPro" id="IPR000244">
    <property type="entry name" value="Ribosomal_bL9"/>
</dbReference>
<dbReference type="InterPro" id="IPR009027">
    <property type="entry name" value="Ribosomal_bL9/RNase_H1_N"/>
</dbReference>
<dbReference type="InterPro" id="IPR020594">
    <property type="entry name" value="Ribosomal_bL9_bac/chp"/>
</dbReference>
<dbReference type="InterPro" id="IPR020069">
    <property type="entry name" value="Ribosomal_bL9_C"/>
</dbReference>
<dbReference type="InterPro" id="IPR036791">
    <property type="entry name" value="Ribosomal_bL9_C_sf"/>
</dbReference>
<dbReference type="InterPro" id="IPR020070">
    <property type="entry name" value="Ribosomal_bL9_N"/>
</dbReference>
<dbReference type="InterPro" id="IPR036935">
    <property type="entry name" value="Ribosomal_bL9_N_sf"/>
</dbReference>
<dbReference type="NCBIfam" id="TIGR00158">
    <property type="entry name" value="L9"/>
    <property type="match status" value="1"/>
</dbReference>
<dbReference type="PANTHER" id="PTHR21368">
    <property type="entry name" value="50S RIBOSOMAL PROTEIN L9"/>
    <property type="match status" value="1"/>
</dbReference>
<dbReference type="Pfam" id="PF03948">
    <property type="entry name" value="Ribosomal_L9_C"/>
    <property type="match status" value="1"/>
</dbReference>
<dbReference type="Pfam" id="PF01281">
    <property type="entry name" value="Ribosomal_L9_N"/>
    <property type="match status" value="1"/>
</dbReference>
<dbReference type="SUPFAM" id="SSF55658">
    <property type="entry name" value="L9 N-domain-like"/>
    <property type="match status" value="1"/>
</dbReference>
<dbReference type="SUPFAM" id="SSF55653">
    <property type="entry name" value="Ribosomal protein L9 C-domain"/>
    <property type="match status" value="1"/>
</dbReference>
<dbReference type="PROSITE" id="PS00651">
    <property type="entry name" value="RIBOSOMAL_L9"/>
    <property type="match status" value="1"/>
</dbReference>
<comment type="function">
    <text evidence="1">Binds to the 23S rRNA.</text>
</comment>
<comment type="similarity">
    <text evidence="1">Belongs to the bacterial ribosomal protein bL9 family.</text>
</comment>
<sequence length="149" mass="15769">MQVILLDKVANLGSLGDQVNVKAGYARNFLVPQGKAVPATKKNIEFFEARRAELEAKLAEVLAAANARAEKINALETVTIASKAGDEGKLFGSIGTRDIADAVTAAGVEVAKSEVRLPNGVLRTTGEHEVSFQVHSEVFAKVIVNVVAE</sequence>
<accession>Q1R357</accession>
<proteinExistence type="inferred from homology"/>